<keyword id="KW-1185">Reference proteome</keyword>
<keyword id="KW-0687">Ribonucleoprotein</keyword>
<keyword id="KW-0689">Ribosomal protein</keyword>
<evidence type="ECO:0000255" key="1">
    <source>
        <dbReference type="HAMAP-Rule" id="MF_00374"/>
    </source>
</evidence>
<evidence type="ECO:0000305" key="2"/>
<accession>Q8R7W2</accession>
<name>RL29_CALS4</name>
<sequence>MKAKEIRELSNEELQQKLSELKAELFNLRFQLATGQLDNPMRIRDVRKTIARIKTILRERELGIKR</sequence>
<feature type="chain" id="PRO_0000130485" description="Large ribosomal subunit protein uL29">
    <location>
        <begin position="1"/>
        <end position="66"/>
    </location>
</feature>
<proteinExistence type="inferred from homology"/>
<dbReference type="EMBL" id="AE008691">
    <property type="protein sequence ID" value="AAM25427.1"/>
    <property type="molecule type" value="Genomic_DNA"/>
</dbReference>
<dbReference type="RefSeq" id="WP_011026330.1">
    <property type="nucleotide sequence ID" value="NZ_JANUCV010000001.1"/>
</dbReference>
<dbReference type="SMR" id="Q8R7W2"/>
<dbReference type="STRING" id="273068.TTE2284"/>
<dbReference type="KEGG" id="tte:TTE2284"/>
<dbReference type="eggNOG" id="COG0255">
    <property type="taxonomic scope" value="Bacteria"/>
</dbReference>
<dbReference type="HOGENOM" id="CLU_158491_5_2_9"/>
<dbReference type="OrthoDB" id="9815192at2"/>
<dbReference type="Proteomes" id="UP000000555">
    <property type="component" value="Chromosome"/>
</dbReference>
<dbReference type="GO" id="GO:0022625">
    <property type="term" value="C:cytosolic large ribosomal subunit"/>
    <property type="evidence" value="ECO:0007669"/>
    <property type="project" value="TreeGrafter"/>
</dbReference>
<dbReference type="GO" id="GO:0003735">
    <property type="term" value="F:structural constituent of ribosome"/>
    <property type="evidence" value="ECO:0007669"/>
    <property type="project" value="InterPro"/>
</dbReference>
<dbReference type="GO" id="GO:0006412">
    <property type="term" value="P:translation"/>
    <property type="evidence" value="ECO:0007669"/>
    <property type="project" value="UniProtKB-UniRule"/>
</dbReference>
<dbReference type="CDD" id="cd00427">
    <property type="entry name" value="Ribosomal_L29_HIP"/>
    <property type="match status" value="1"/>
</dbReference>
<dbReference type="FunFam" id="1.10.287.310:FF:000001">
    <property type="entry name" value="50S ribosomal protein L29"/>
    <property type="match status" value="1"/>
</dbReference>
<dbReference type="Gene3D" id="1.10.287.310">
    <property type="match status" value="1"/>
</dbReference>
<dbReference type="HAMAP" id="MF_00374">
    <property type="entry name" value="Ribosomal_uL29"/>
    <property type="match status" value="1"/>
</dbReference>
<dbReference type="InterPro" id="IPR050063">
    <property type="entry name" value="Ribosomal_protein_uL29"/>
</dbReference>
<dbReference type="InterPro" id="IPR001854">
    <property type="entry name" value="Ribosomal_uL29"/>
</dbReference>
<dbReference type="InterPro" id="IPR018254">
    <property type="entry name" value="Ribosomal_uL29_CS"/>
</dbReference>
<dbReference type="InterPro" id="IPR036049">
    <property type="entry name" value="Ribosomal_uL29_sf"/>
</dbReference>
<dbReference type="NCBIfam" id="TIGR00012">
    <property type="entry name" value="L29"/>
    <property type="match status" value="1"/>
</dbReference>
<dbReference type="PANTHER" id="PTHR10916">
    <property type="entry name" value="60S RIBOSOMAL PROTEIN L35/50S RIBOSOMAL PROTEIN L29"/>
    <property type="match status" value="1"/>
</dbReference>
<dbReference type="PANTHER" id="PTHR10916:SF0">
    <property type="entry name" value="LARGE RIBOSOMAL SUBUNIT PROTEIN UL29C"/>
    <property type="match status" value="1"/>
</dbReference>
<dbReference type="Pfam" id="PF00831">
    <property type="entry name" value="Ribosomal_L29"/>
    <property type="match status" value="1"/>
</dbReference>
<dbReference type="SUPFAM" id="SSF46561">
    <property type="entry name" value="Ribosomal protein L29 (L29p)"/>
    <property type="match status" value="1"/>
</dbReference>
<dbReference type="PROSITE" id="PS00579">
    <property type="entry name" value="RIBOSOMAL_L29"/>
    <property type="match status" value="1"/>
</dbReference>
<protein>
    <recommendedName>
        <fullName evidence="1">Large ribosomal subunit protein uL29</fullName>
    </recommendedName>
    <alternativeName>
        <fullName evidence="2">50S ribosomal protein L29</fullName>
    </alternativeName>
</protein>
<gene>
    <name evidence="1" type="primary">rpmC</name>
    <name type="ordered locus">TTE2284</name>
</gene>
<organism>
    <name type="scientific">Caldanaerobacter subterraneus subsp. tengcongensis (strain DSM 15242 / JCM 11007 / NBRC 100824 / MB4)</name>
    <name type="common">Thermoanaerobacter tengcongensis</name>
    <dbReference type="NCBI Taxonomy" id="273068"/>
    <lineage>
        <taxon>Bacteria</taxon>
        <taxon>Bacillati</taxon>
        <taxon>Bacillota</taxon>
        <taxon>Clostridia</taxon>
        <taxon>Thermoanaerobacterales</taxon>
        <taxon>Thermoanaerobacteraceae</taxon>
        <taxon>Caldanaerobacter</taxon>
    </lineage>
</organism>
<comment type="similarity">
    <text evidence="1">Belongs to the universal ribosomal protein uL29 family.</text>
</comment>
<reference key="1">
    <citation type="journal article" date="2002" name="Genome Res.">
        <title>A complete sequence of the T. tengcongensis genome.</title>
        <authorList>
            <person name="Bao Q."/>
            <person name="Tian Y."/>
            <person name="Li W."/>
            <person name="Xu Z."/>
            <person name="Xuan Z."/>
            <person name="Hu S."/>
            <person name="Dong W."/>
            <person name="Yang J."/>
            <person name="Chen Y."/>
            <person name="Xue Y."/>
            <person name="Xu Y."/>
            <person name="Lai X."/>
            <person name="Huang L."/>
            <person name="Dong X."/>
            <person name="Ma Y."/>
            <person name="Ling L."/>
            <person name="Tan H."/>
            <person name="Chen R."/>
            <person name="Wang J."/>
            <person name="Yu J."/>
            <person name="Yang H."/>
        </authorList>
    </citation>
    <scope>NUCLEOTIDE SEQUENCE [LARGE SCALE GENOMIC DNA]</scope>
    <source>
        <strain>DSM 15242 / JCM 11007 / NBRC 100824 / MB4</strain>
    </source>
</reference>